<proteinExistence type="inferred from homology"/>
<gene>
    <name evidence="1" type="primary">ileS</name>
    <name type="ordered locus">BUAPTUC7_148</name>
</gene>
<feature type="chain" id="PRO_1000189134" description="Isoleucine--tRNA ligase">
    <location>
        <begin position="1"/>
        <end position="940"/>
    </location>
</feature>
<feature type="short sequence motif" description="'HIGH' region">
    <location>
        <begin position="58"/>
        <end position="68"/>
    </location>
</feature>
<feature type="short sequence motif" description="'KMSKS' region">
    <location>
        <begin position="604"/>
        <end position="608"/>
    </location>
</feature>
<feature type="binding site" evidence="1">
    <location>
        <position position="563"/>
    </location>
    <ligand>
        <name>L-isoleucyl-5'-AMP</name>
        <dbReference type="ChEBI" id="CHEBI:178002"/>
    </ligand>
</feature>
<feature type="binding site" evidence="1">
    <location>
        <position position="607"/>
    </location>
    <ligand>
        <name>ATP</name>
        <dbReference type="ChEBI" id="CHEBI:30616"/>
    </ligand>
</feature>
<feature type="binding site" evidence="1">
    <location>
        <position position="903"/>
    </location>
    <ligand>
        <name>Zn(2+)</name>
        <dbReference type="ChEBI" id="CHEBI:29105"/>
    </ligand>
</feature>
<feature type="binding site" evidence="1">
    <location>
        <position position="906"/>
    </location>
    <ligand>
        <name>Zn(2+)</name>
        <dbReference type="ChEBI" id="CHEBI:29105"/>
    </ligand>
</feature>
<feature type="binding site" evidence="1">
    <location>
        <position position="923"/>
    </location>
    <ligand>
        <name>Zn(2+)</name>
        <dbReference type="ChEBI" id="CHEBI:29105"/>
    </ligand>
</feature>
<feature type="binding site" evidence="1">
    <location>
        <position position="926"/>
    </location>
    <ligand>
        <name>Zn(2+)</name>
        <dbReference type="ChEBI" id="CHEBI:29105"/>
    </ligand>
</feature>
<comment type="function">
    <text evidence="1">Catalyzes the attachment of isoleucine to tRNA(Ile). As IleRS can inadvertently accommodate and process structurally similar amino acids such as valine, to avoid such errors it has two additional distinct tRNA(Ile)-dependent editing activities. One activity is designated as 'pretransfer' editing and involves the hydrolysis of activated Val-AMP. The other activity is designated 'posttransfer' editing and involves deacylation of mischarged Val-tRNA(Ile).</text>
</comment>
<comment type="catalytic activity">
    <reaction evidence="1">
        <text>tRNA(Ile) + L-isoleucine + ATP = L-isoleucyl-tRNA(Ile) + AMP + diphosphate</text>
        <dbReference type="Rhea" id="RHEA:11060"/>
        <dbReference type="Rhea" id="RHEA-COMP:9666"/>
        <dbReference type="Rhea" id="RHEA-COMP:9695"/>
        <dbReference type="ChEBI" id="CHEBI:30616"/>
        <dbReference type="ChEBI" id="CHEBI:33019"/>
        <dbReference type="ChEBI" id="CHEBI:58045"/>
        <dbReference type="ChEBI" id="CHEBI:78442"/>
        <dbReference type="ChEBI" id="CHEBI:78528"/>
        <dbReference type="ChEBI" id="CHEBI:456215"/>
        <dbReference type="EC" id="6.1.1.5"/>
    </reaction>
</comment>
<comment type="cofactor">
    <cofactor evidence="1">
        <name>Zn(2+)</name>
        <dbReference type="ChEBI" id="CHEBI:29105"/>
    </cofactor>
    <text evidence="1">Binds 1 zinc ion per subunit.</text>
</comment>
<comment type="subunit">
    <text evidence="1">Monomer.</text>
</comment>
<comment type="subcellular location">
    <subcellularLocation>
        <location evidence="1">Cytoplasm</location>
    </subcellularLocation>
</comment>
<comment type="domain">
    <text evidence="1">IleRS has two distinct active sites: one for aminoacylation and one for editing. The misactivated valine is translocated from the active site to the editing site, which sterically excludes the correctly activated isoleucine. The single editing site contains two valyl binding pockets, one specific for each substrate (Val-AMP or Val-tRNA(Ile)).</text>
</comment>
<comment type="similarity">
    <text evidence="1">Belongs to the class-I aminoacyl-tRNA synthetase family. IleS type 1 subfamily.</text>
</comment>
<name>SYI_BUCAT</name>
<organism>
    <name type="scientific">Buchnera aphidicola subsp. Acyrthosiphon pisum (strain Tuc7)</name>
    <dbReference type="NCBI Taxonomy" id="561501"/>
    <lineage>
        <taxon>Bacteria</taxon>
        <taxon>Pseudomonadati</taxon>
        <taxon>Pseudomonadota</taxon>
        <taxon>Gammaproteobacteria</taxon>
        <taxon>Enterobacterales</taxon>
        <taxon>Erwiniaceae</taxon>
        <taxon>Buchnera</taxon>
    </lineage>
</organism>
<evidence type="ECO:0000255" key="1">
    <source>
        <dbReference type="HAMAP-Rule" id="MF_02002"/>
    </source>
</evidence>
<accession>B8D754</accession>
<sequence length="940" mass="110485">MDDYKDTLNLPKTLFSMRGNLSKKEPNILKSWNENNLYKLIRKKNQEKKIFFLHDGPPYANGNIHIGHAVNKILKDIIIKSKNMSGFDAPYIPSWDCHGLPIEQKVEEKIKSNQGEISTTEFQEKCRKYAQDQVEKQKKDFIRLGVIGDWDNPHLTMNFKNEANIIKTLSKIVQKKHLYQDFKPIHWCLKCASSLSEAEIEYSKKKSDSIIVGFKFKYRSIIEKLFDFQISNKKEIHLLIWTTTPWTLPSSKAISIHPDFQYQLIETERCYLIIAKELVEKTLNTLKIKKSIIRNYVKGRFLEKMICLHPFLKNIDLPVILGKHVTLESGTGAVHTAPDHGLEDYIISQKYNIKTSNIVNFKGEYISNTHDKLDGVNVLEANSIIIELLIKNNTFFHHESLIHSYPHCWRHKSPVIYRATPQWFIDIDQKQLRIKLLQEIKKVRWIPEWGESRIGEMIKKRPDWCISRQRKWGVPMSIFIHKNTRKIHPNTFVFMKKIAKKVELEGLQVWWNIDSKEILGEEYQSYEKILDILDVWFESGNTHTTINYKNKNYTKKNADMFLEGSDQHRGWFMSSLIISTLISEKKPYSEVLTHGFVVDGKGQKMSKSIGNTISPNEIVDTLGADILRLWVASSNYSNDISISNEILKSSSDIYRRIRNTARFMLANISDFDPKKNIISKENMVLLDKWAIGQTKIVQEEIIQHYNNYNFHAVIQRLMYFCSIEMGSFYLDIIKDRQYTLKKHSQERRSSQTAIYYIINSLVRWIAPILSFTADEIWSYLPENNSQYVFMEEWFDKLFYLDQDDLFNYQFWNEIITIKHEINKFLEEAIQNKTINNSLETSIILYVSHELSNKLKILEQETKFIFLTSDIQIKLYDTAPKNAKKSKIVPYLKVSLEKIKGKKCPRCWHYFNFTKKNIKNSDICNRCILNTIGNGEKRIFI</sequence>
<reference key="1">
    <citation type="journal article" date="2009" name="Science">
        <title>The dynamics and time scale of ongoing genomic erosion in symbiotic bacteria.</title>
        <authorList>
            <person name="Moran N.A."/>
            <person name="McLaughlin H.J."/>
            <person name="Sorek R."/>
        </authorList>
    </citation>
    <scope>NUCLEOTIDE SEQUENCE [LARGE SCALE GENOMIC DNA]</scope>
    <source>
        <strain>Tuc7</strain>
    </source>
</reference>
<keyword id="KW-0030">Aminoacyl-tRNA synthetase</keyword>
<keyword id="KW-0067">ATP-binding</keyword>
<keyword id="KW-0963">Cytoplasm</keyword>
<keyword id="KW-0436">Ligase</keyword>
<keyword id="KW-0479">Metal-binding</keyword>
<keyword id="KW-0547">Nucleotide-binding</keyword>
<keyword id="KW-0648">Protein biosynthesis</keyword>
<keyword id="KW-0862">Zinc</keyword>
<dbReference type="EC" id="6.1.1.5" evidence="1"/>
<dbReference type="EMBL" id="CP001158">
    <property type="protein sequence ID" value="ACL29969.1"/>
    <property type="molecule type" value="Genomic_DNA"/>
</dbReference>
<dbReference type="RefSeq" id="WP_009874105.1">
    <property type="nucleotide sequence ID" value="NC_011834.1"/>
</dbReference>
<dbReference type="SMR" id="B8D754"/>
<dbReference type="KEGG" id="bau:BUAPTUC7_148"/>
<dbReference type="HOGENOM" id="CLU_001493_7_0_6"/>
<dbReference type="GO" id="GO:0005829">
    <property type="term" value="C:cytosol"/>
    <property type="evidence" value="ECO:0007669"/>
    <property type="project" value="TreeGrafter"/>
</dbReference>
<dbReference type="GO" id="GO:0002161">
    <property type="term" value="F:aminoacyl-tRNA deacylase activity"/>
    <property type="evidence" value="ECO:0007669"/>
    <property type="project" value="InterPro"/>
</dbReference>
<dbReference type="GO" id="GO:0005524">
    <property type="term" value="F:ATP binding"/>
    <property type="evidence" value="ECO:0007669"/>
    <property type="project" value="UniProtKB-UniRule"/>
</dbReference>
<dbReference type="GO" id="GO:0004822">
    <property type="term" value="F:isoleucine-tRNA ligase activity"/>
    <property type="evidence" value="ECO:0007669"/>
    <property type="project" value="UniProtKB-UniRule"/>
</dbReference>
<dbReference type="GO" id="GO:0000049">
    <property type="term" value="F:tRNA binding"/>
    <property type="evidence" value="ECO:0007669"/>
    <property type="project" value="InterPro"/>
</dbReference>
<dbReference type="GO" id="GO:0008270">
    <property type="term" value="F:zinc ion binding"/>
    <property type="evidence" value="ECO:0007669"/>
    <property type="project" value="UniProtKB-UniRule"/>
</dbReference>
<dbReference type="GO" id="GO:0006428">
    <property type="term" value="P:isoleucyl-tRNA aminoacylation"/>
    <property type="evidence" value="ECO:0007669"/>
    <property type="project" value="UniProtKB-UniRule"/>
</dbReference>
<dbReference type="CDD" id="cd07960">
    <property type="entry name" value="Anticodon_Ia_Ile_BEm"/>
    <property type="match status" value="1"/>
</dbReference>
<dbReference type="CDD" id="cd00818">
    <property type="entry name" value="IleRS_core"/>
    <property type="match status" value="1"/>
</dbReference>
<dbReference type="FunFam" id="1.10.730.20:FF:000001">
    <property type="entry name" value="Isoleucine--tRNA ligase"/>
    <property type="match status" value="1"/>
</dbReference>
<dbReference type="FunFam" id="3.40.50.620:FF:000042">
    <property type="entry name" value="Isoleucine--tRNA ligase"/>
    <property type="match status" value="1"/>
</dbReference>
<dbReference type="FunFam" id="3.40.50.620:FF:000048">
    <property type="entry name" value="Isoleucine--tRNA ligase"/>
    <property type="match status" value="1"/>
</dbReference>
<dbReference type="Gene3D" id="1.10.730.20">
    <property type="match status" value="1"/>
</dbReference>
<dbReference type="Gene3D" id="3.40.50.620">
    <property type="entry name" value="HUPs"/>
    <property type="match status" value="2"/>
</dbReference>
<dbReference type="HAMAP" id="MF_02002">
    <property type="entry name" value="Ile_tRNA_synth_type1"/>
    <property type="match status" value="1"/>
</dbReference>
<dbReference type="InterPro" id="IPR001412">
    <property type="entry name" value="aa-tRNA-synth_I_CS"/>
</dbReference>
<dbReference type="InterPro" id="IPR002300">
    <property type="entry name" value="aa-tRNA-synth_Ia"/>
</dbReference>
<dbReference type="InterPro" id="IPR033708">
    <property type="entry name" value="Anticodon_Ile_BEm"/>
</dbReference>
<dbReference type="InterPro" id="IPR002301">
    <property type="entry name" value="Ile-tRNA-ligase"/>
</dbReference>
<dbReference type="InterPro" id="IPR023585">
    <property type="entry name" value="Ile-tRNA-ligase_type1"/>
</dbReference>
<dbReference type="InterPro" id="IPR050081">
    <property type="entry name" value="Ile-tRNA_ligase"/>
</dbReference>
<dbReference type="InterPro" id="IPR013155">
    <property type="entry name" value="M/V/L/I-tRNA-synth_anticd-bd"/>
</dbReference>
<dbReference type="InterPro" id="IPR014729">
    <property type="entry name" value="Rossmann-like_a/b/a_fold"/>
</dbReference>
<dbReference type="InterPro" id="IPR009080">
    <property type="entry name" value="tRNAsynth_Ia_anticodon-bd"/>
</dbReference>
<dbReference type="InterPro" id="IPR009008">
    <property type="entry name" value="Val/Leu/Ile-tRNA-synth_edit"/>
</dbReference>
<dbReference type="InterPro" id="IPR010663">
    <property type="entry name" value="Znf_FPG/IleRS"/>
</dbReference>
<dbReference type="NCBIfam" id="TIGR00392">
    <property type="entry name" value="ileS"/>
    <property type="match status" value="1"/>
</dbReference>
<dbReference type="PANTHER" id="PTHR42765:SF1">
    <property type="entry name" value="ISOLEUCINE--TRNA LIGASE, MITOCHONDRIAL"/>
    <property type="match status" value="1"/>
</dbReference>
<dbReference type="PANTHER" id="PTHR42765">
    <property type="entry name" value="SOLEUCYL-TRNA SYNTHETASE"/>
    <property type="match status" value="1"/>
</dbReference>
<dbReference type="Pfam" id="PF08264">
    <property type="entry name" value="Anticodon_1"/>
    <property type="match status" value="1"/>
</dbReference>
<dbReference type="Pfam" id="PF00133">
    <property type="entry name" value="tRNA-synt_1"/>
    <property type="match status" value="1"/>
</dbReference>
<dbReference type="Pfam" id="PF06827">
    <property type="entry name" value="zf-FPG_IleRS"/>
    <property type="match status" value="1"/>
</dbReference>
<dbReference type="PRINTS" id="PR00984">
    <property type="entry name" value="TRNASYNTHILE"/>
</dbReference>
<dbReference type="SUPFAM" id="SSF47323">
    <property type="entry name" value="Anticodon-binding domain of a subclass of class I aminoacyl-tRNA synthetases"/>
    <property type="match status" value="1"/>
</dbReference>
<dbReference type="SUPFAM" id="SSF52374">
    <property type="entry name" value="Nucleotidylyl transferase"/>
    <property type="match status" value="1"/>
</dbReference>
<dbReference type="SUPFAM" id="SSF50677">
    <property type="entry name" value="ValRS/IleRS/LeuRS editing domain"/>
    <property type="match status" value="1"/>
</dbReference>
<dbReference type="PROSITE" id="PS00178">
    <property type="entry name" value="AA_TRNA_LIGASE_I"/>
    <property type="match status" value="1"/>
</dbReference>
<protein>
    <recommendedName>
        <fullName evidence="1">Isoleucine--tRNA ligase</fullName>
        <ecNumber evidence="1">6.1.1.5</ecNumber>
    </recommendedName>
    <alternativeName>
        <fullName evidence="1">Isoleucyl-tRNA synthetase</fullName>
        <shortName evidence="1">IleRS</shortName>
    </alternativeName>
</protein>